<keyword id="KW-1185">Reference proteome</keyword>
<accession>Q8E1Q3</accession>
<gene>
    <name type="ordered locus">SAG0300</name>
</gene>
<comment type="similarity">
    <text evidence="1">Belongs to the UPF0398 family.</text>
</comment>
<dbReference type="EMBL" id="AE009948">
    <property type="protein sequence ID" value="AAM99207.1"/>
    <property type="molecule type" value="Genomic_DNA"/>
</dbReference>
<dbReference type="RefSeq" id="NP_687335.1">
    <property type="nucleotide sequence ID" value="NC_004116.1"/>
</dbReference>
<dbReference type="RefSeq" id="WP_000843096.1">
    <property type="nucleotide sequence ID" value="NC_004116.1"/>
</dbReference>
<dbReference type="SMR" id="Q8E1Q3"/>
<dbReference type="STRING" id="208435.SAG0300"/>
<dbReference type="KEGG" id="sag:SAG0300"/>
<dbReference type="PATRIC" id="fig|208435.3.peg.298"/>
<dbReference type="HOGENOM" id="CLU_105319_0_0_9"/>
<dbReference type="OrthoDB" id="2301957at2"/>
<dbReference type="Proteomes" id="UP000000821">
    <property type="component" value="Chromosome"/>
</dbReference>
<dbReference type="Gene3D" id="3.40.50.450">
    <property type="match status" value="1"/>
</dbReference>
<dbReference type="HAMAP" id="MF_01575">
    <property type="entry name" value="UPF0398"/>
    <property type="match status" value="1"/>
</dbReference>
<dbReference type="InterPro" id="IPR010697">
    <property type="entry name" value="YspA"/>
</dbReference>
<dbReference type="NCBIfam" id="NF010181">
    <property type="entry name" value="PRK13660.1"/>
    <property type="match status" value="1"/>
</dbReference>
<dbReference type="PANTHER" id="PTHR38440:SF1">
    <property type="entry name" value="UPF0398 PROTEIN SPR0331"/>
    <property type="match status" value="1"/>
</dbReference>
<dbReference type="PANTHER" id="PTHR38440">
    <property type="entry name" value="UPF0398 PROTEIN YPSA"/>
    <property type="match status" value="1"/>
</dbReference>
<dbReference type="Pfam" id="PF06908">
    <property type="entry name" value="YpsA"/>
    <property type="match status" value="1"/>
</dbReference>
<dbReference type="PIRSF" id="PIRSF021290">
    <property type="entry name" value="DUF1273"/>
    <property type="match status" value="1"/>
</dbReference>
<dbReference type="SUPFAM" id="SSF102405">
    <property type="entry name" value="MCP/YpsA-like"/>
    <property type="match status" value="1"/>
</dbReference>
<name>Y300_STRA5</name>
<organism>
    <name type="scientific">Streptococcus agalactiae serotype V (strain ATCC BAA-611 / 2603 V/R)</name>
    <dbReference type="NCBI Taxonomy" id="208435"/>
    <lineage>
        <taxon>Bacteria</taxon>
        <taxon>Bacillati</taxon>
        <taxon>Bacillota</taxon>
        <taxon>Bacilli</taxon>
        <taxon>Lactobacillales</taxon>
        <taxon>Streptococcaceae</taxon>
        <taxon>Streptococcus</taxon>
    </lineage>
</organism>
<sequence length="172" mass="20587">MKSTILVTGYKNFELGIFQDKDPRITIIKKAIDKDFRRFLENGADWFIFMGNLGFEYWALEVALDLQKEYDFQIATIFTFENHGQNWNEANKAKLALFKQVDFVKYTFPSYENPGQFKQYNHFLINNTQGAYLFYDSENETNLKFLLEMMEKKEAYDISFLTFDRLNEIYEE</sequence>
<proteinExistence type="inferred from homology"/>
<feature type="chain" id="PRO_0000267183" description="UPF0398 protein SAG0300">
    <location>
        <begin position="1"/>
        <end position="172"/>
    </location>
</feature>
<evidence type="ECO:0000255" key="1">
    <source>
        <dbReference type="HAMAP-Rule" id="MF_01575"/>
    </source>
</evidence>
<reference key="1">
    <citation type="journal article" date="2002" name="Proc. Natl. Acad. Sci. U.S.A.">
        <title>Complete genome sequence and comparative genomic analysis of an emerging human pathogen, serotype V Streptococcus agalactiae.</title>
        <authorList>
            <person name="Tettelin H."/>
            <person name="Masignani V."/>
            <person name="Cieslewicz M.J."/>
            <person name="Eisen J.A."/>
            <person name="Peterson S.N."/>
            <person name="Wessels M.R."/>
            <person name="Paulsen I.T."/>
            <person name="Nelson K.E."/>
            <person name="Margarit I."/>
            <person name="Read T.D."/>
            <person name="Madoff L.C."/>
            <person name="Wolf A.M."/>
            <person name="Beanan M.J."/>
            <person name="Brinkac L.M."/>
            <person name="Daugherty S.C."/>
            <person name="DeBoy R.T."/>
            <person name="Durkin A.S."/>
            <person name="Kolonay J.F."/>
            <person name="Madupu R."/>
            <person name="Lewis M.R."/>
            <person name="Radune D."/>
            <person name="Fedorova N.B."/>
            <person name="Scanlan D."/>
            <person name="Khouri H.M."/>
            <person name="Mulligan S."/>
            <person name="Carty H.A."/>
            <person name="Cline R.T."/>
            <person name="Van Aken S.E."/>
            <person name="Gill J."/>
            <person name="Scarselli M."/>
            <person name="Mora M."/>
            <person name="Iacobini E.T."/>
            <person name="Brettoni C."/>
            <person name="Galli G."/>
            <person name="Mariani M."/>
            <person name="Vegni F."/>
            <person name="Maione D."/>
            <person name="Rinaudo D."/>
            <person name="Rappuoli R."/>
            <person name="Telford J.L."/>
            <person name="Kasper D.L."/>
            <person name="Grandi G."/>
            <person name="Fraser C.M."/>
        </authorList>
    </citation>
    <scope>NUCLEOTIDE SEQUENCE [LARGE SCALE GENOMIC DNA]</scope>
    <source>
        <strain>ATCC BAA-611 / 2603 V/R</strain>
    </source>
</reference>
<protein>
    <recommendedName>
        <fullName evidence="1">UPF0398 protein SAG0300</fullName>
    </recommendedName>
</protein>